<organism>
    <name type="scientific">Oryza sativa subsp. japonica</name>
    <name type="common">Rice</name>
    <dbReference type="NCBI Taxonomy" id="39947"/>
    <lineage>
        <taxon>Eukaryota</taxon>
        <taxon>Viridiplantae</taxon>
        <taxon>Streptophyta</taxon>
        <taxon>Embryophyta</taxon>
        <taxon>Tracheophyta</taxon>
        <taxon>Spermatophyta</taxon>
        <taxon>Magnoliopsida</taxon>
        <taxon>Liliopsida</taxon>
        <taxon>Poales</taxon>
        <taxon>Poaceae</taxon>
        <taxon>BOP clade</taxon>
        <taxon>Oryzoideae</taxon>
        <taxon>Oryzeae</taxon>
        <taxon>Oryzinae</taxon>
        <taxon>Oryza</taxon>
        <taxon>Oryza sativa</taxon>
    </lineage>
</organism>
<protein>
    <recommendedName>
        <fullName>Inorganic phosphate transporter 1-11</fullName>
        <shortName>OsPT11</shortName>
        <shortName>OsPht1;11</shortName>
    </recommendedName>
    <alternativeName>
        <fullName>H(+)/Pi cotransporter</fullName>
    </alternativeName>
</protein>
<accession>Q94DB8</accession>
<accession>A0A0P0V633</accession>
<accession>Q8GRJ0</accession>
<reference key="1">
    <citation type="journal article" date="2002" name="Proc. Natl. Acad. Sci. U.S.A.">
        <title>Rice phosphate transporters include an evolutionarily divergent gene specifically activated in arbuscular mycorrhizal symbiosis.</title>
        <authorList>
            <person name="Paszkowski U."/>
            <person name="Kroken S."/>
            <person name="Roux C."/>
            <person name="Briggs S.P."/>
        </authorList>
    </citation>
    <scope>NUCLEOTIDE SEQUENCE [GENOMIC DNA / MRNA]</scope>
    <scope>FUNCTION</scope>
    <scope>INDUCTION</scope>
</reference>
<reference key="2">
    <citation type="journal article" date="2002" name="Nature">
        <title>The genome sequence and structure of rice chromosome 1.</title>
        <authorList>
            <person name="Sasaki T."/>
            <person name="Matsumoto T."/>
            <person name="Yamamoto K."/>
            <person name="Sakata K."/>
            <person name="Baba T."/>
            <person name="Katayose Y."/>
            <person name="Wu J."/>
            <person name="Niimura Y."/>
            <person name="Cheng Z."/>
            <person name="Nagamura Y."/>
            <person name="Antonio B.A."/>
            <person name="Kanamori H."/>
            <person name="Hosokawa S."/>
            <person name="Masukawa M."/>
            <person name="Arikawa K."/>
            <person name="Chiden Y."/>
            <person name="Hayashi M."/>
            <person name="Okamoto M."/>
            <person name="Ando T."/>
            <person name="Aoki H."/>
            <person name="Arita K."/>
            <person name="Hamada M."/>
            <person name="Harada C."/>
            <person name="Hijishita S."/>
            <person name="Honda M."/>
            <person name="Ichikawa Y."/>
            <person name="Idonuma A."/>
            <person name="Iijima M."/>
            <person name="Ikeda M."/>
            <person name="Ikeno M."/>
            <person name="Ito S."/>
            <person name="Ito T."/>
            <person name="Ito Y."/>
            <person name="Ito Y."/>
            <person name="Iwabuchi A."/>
            <person name="Kamiya K."/>
            <person name="Karasawa W."/>
            <person name="Katagiri S."/>
            <person name="Kikuta A."/>
            <person name="Kobayashi N."/>
            <person name="Kono I."/>
            <person name="Machita K."/>
            <person name="Maehara T."/>
            <person name="Mizuno H."/>
            <person name="Mizubayashi T."/>
            <person name="Mukai Y."/>
            <person name="Nagasaki H."/>
            <person name="Nakashima M."/>
            <person name="Nakama Y."/>
            <person name="Nakamichi Y."/>
            <person name="Nakamura M."/>
            <person name="Namiki N."/>
            <person name="Negishi M."/>
            <person name="Ohta I."/>
            <person name="Ono N."/>
            <person name="Saji S."/>
            <person name="Sakai K."/>
            <person name="Shibata M."/>
            <person name="Shimokawa T."/>
            <person name="Shomura A."/>
            <person name="Song J."/>
            <person name="Takazaki Y."/>
            <person name="Terasawa K."/>
            <person name="Tsuji K."/>
            <person name="Waki K."/>
            <person name="Yamagata H."/>
            <person name="Yamane H."/>
            <person name="Yoshiki S."/>
            <person name="Yoshihara R."/>
            <person name="Yukawa K."/>
            <person name="Zhong H."/>
            <person name="Iwama H."/>
            <person name="Endo T."/>
            <person name="Ito H."/>
            <person name="Hahn J.H."/>
            <person name="Kim H.-I."/>
            <person name="Eun M.-Y."/>
            <person name="Yano M."/>
            <person name="Jiang J."/>
            <person name="Gojobori T."/>
        </authorList>
    </citation>
    <scope>NUCLEOTIDE SEQUENCE [LARGE SCALE GENOMIC DNA]</scope>
    <source>
        <strain>cv. Nipponbare</strain>
    </source>
</reference>
<reference key="3">
    <citation type="journal article" date="2005" name="Nature">
        <title>The map-based sequence of the rice genome.</title>
        <authorList>
            <consortium name="International rice genome sequencing project (IRGSP)"/>
        </authorList>
    </citation>
    <scope>NUCLEOTIDE SEQUENCE [LARGE SCALE GENOMIC DNA]</scope>
    <source>
        <strain>cv. Nipponbare</strain>
    </source>
</reference>
<reference key="4">
    <citation type="journal article" date="2008" name="Nucleic Acids Res.">
        <title>The rice annotation project database (RAP-DB): 2008 update.</title>
        <authorList>
            <consortium name="The rice annotation project (RAP)"/>
        </authorList>
    </citation>
    <scope>GENOME REANNOTATION</scope>
    <source>
        <strain>cv. Nipponbare</strain>
    </source>
</reference>
<reference key="5">
    <citation type="journal article" date="2013" name="Rice">
        <title>Improvement of the Oryza sativa Nipponbare reference genome using next generation sequence and optical map data.</title>
        <authorList>
            <person name="Kawahara Y."/>
            <person name="de la Bastide M."/>
            <person name="Hamilton J.P."/>
            <person name="Kanamori H."/>
            <person name="McCombie W.R."/>
            <person name="Ouyang S."/>
            <person name="Schwartz D.C."/>
            <person name="Tanaka T."/>
            <person name="Wu J."/>
            <person name="Zhou S."/>
            <person name="Childs K.L."/>
            <person name="Davidson R.M."/>
            <person name="Lin H."/>
            <person name="Quesada-Ocampo L."/>
            <person name="Vaillancourt B."/>
            <person name="Sakai H."/>
            <person name="Lee S.S."/>
            <person name="Kim J."/>
            <person name="Numa H."/>
            <person name="Itoh T."/>
            <person name="Buell C.R."/>
            <person name="Matsumoto T."/>
        </authorList>
    </citation>
    <scope>GENOME REANNOTATION</scope>
    <source>
        <strain>cv. Nipponbare</strain>
    </source>
</reference>
<reference key="6">
    <citation type="journal article" date="2005" name="PLoS Biol.">
        <title>The genomes of Oryza sativa: a history of duplications.</title>
        <authorList>
            <person name="Yu J."/>
            <person name="Wang J."/>
            <person name="Lin W."/>
            <person name="Li S."/>
            <person name="Li H."/>
            <person name="Zhou J."/>
            <person name="Ni P."/>
            <person name="Dong W."/>
            <person name="Hu S."/>
            <person name="Zeng C."/>
            <person name="Zhang J."/>
            <person name="Zhang Y."/>
            <person name="Li R."/>
            <person name="Xu Z."/>
            <person name="Li S."/>
            <person name="Li X."/>
            <person name="Zheng H."/>
            <person name="Cong L."/>
            <person name="Lin L."/>
            <person name="Yin J."/>
            <person name="Geng J."/>
            <person name="Li G."/>
            <person name="Shi J."/>
            <person name="Liu J."/>
            <person name="Lv H."/>
            <person name="Li J."/>
            <person name="Wang J."/>
            <person name="Deng Y."/>
            <person name="Ran L."/>
            <person name="Shi X."/>
            <person name="Wang X."/>
            <person name="Wu Q."/>
            <person name="Li C."/>
            <person name="Ren X."/>
            <person name="Wang J."/>
            <person name="Wang X."/>
            <person name="Li D."/>
            <person name="Liu D."/>
            <person name="Zhang X."/>
            <person name="Ji Z."/>
            <person name="Zhao W."/>
            <person name="Sun Y."/>
            <person name="Zhang Z."/>
            <person name="Bao J."/>
            <person name="Han Y."/>
            <person name="Dong L."/>
            <person name="Ji J."/>
            <person name="Chen P."/>
            <person name="Wu S."/>
            <person name="Liu J."/>
            <person name="Xiao Y."/>
            <person name="Bu D."/>
            <person name="Tan J."/>
            <person name="Yang L."/>
            <person name="Ye C."/>
            <person name="Zhang J."/>
            <person name="Xu J."/>
            <person name="Zhou Y."/>
            <person name="Yu Y."/>
            <person name="Zhang B."/>
            <person name="Zhuang S."/>
            <person name="Wei H."/>
            <person name="Liu B."/>
            <person name="Lei M."/>
            <person name="Yu H."/>
            <person name="Li Y."/>
            <person name="Xu H."/>
            <person name="Wei S."/>
            <person name="He X."/>
            <person name="Fang L."/>
            <person name="Zhang Z."/>
            <person name="Zhang Y."/>
            <person name="Huang X."/>
            <person name="Su Z."/>
            <person name="Tong W."/>
            <person name="Li J."/>
            <person name="Tong Z."/>
            <person name="Li S."/>
            <person name="Ye J."/>
            <person name="Wang L."/>
            <person name="Fang L."/>
            <person name="Lei T."/>
            <person name="Chen C.-S."/>
            <person name="Chen H.-C."/>
            <person name="Xu Z."/>
            <person name="Li H."/>
            <person name="Huang H."/>
            <person name="Zhang F."/>
            <person name="Xu H."/>
            <person name="Li N."/>
            <person name="Zhao C."/>
            <person name="Li S."/>
            <person name="Dong L."/>
            <person name="Huang Y."/>
            <person name="Li L."/>
            <person name="Xi Y."/>
            <person name="Qi Q."/>
            <person name="Li W."/>
            <person name="Zhang B."/>
            <person name="Hu W."/>
            <person name="Zhang Y."/>
            <person name="Tian X."/>
            <person name="Jiao Y."/>
            <person name="Liang X."/>
            <person name="Jin J."/>
            <person name="Gao L."/>
            <person name="Zheng W."/>
            <person name="Hao B."/>
            <person name="Liu S.-M."/>
            <person name="Wang W."/>
            <person name="Yuan L."/>
            <person name="Cao M."/>
            <person name="McDermott J."/>
            <person name="Samudrala R."/>
            <person name="Wang J."/>
            <person name="Wong G.K.-S."/>
            <person name="Yang H."/>
        </authorList>
    </citation>
    <scope>NUCLEOTIDE SEQUENCE [LARGE SCALE GENOMIC DNA]</scope>
    <source>
        <strain>cv. Nipponbare</strain>
    </source>
</reference>
<keyword id="KW-0472">Membrane</keyword>
<keyword id="KW-0592">Phosphate transport</keyword>
<keyword id="KW-1185">Reference proteome</keyword>
<keyword id="KW-0769">Symport</keyword>
<keyword id="KW-0812">Transmembrane</keyword>
<keyword id="KW-1133">Transmembrane helix</keyword>
<keyword id="KW-0813">Transport</keyword>
<gene>
    <name type="primary">PHT1-11</name>
    <name type="synonym">PT11</name>
    <name type="ordered locus">Os01g0657100</name>
    <name type="ordered locus">LOC_Os01g46860</name>
    <name type="ORF">OsJ_002785</name>
    <name type="ORF">P0694A04.21</name>
</gene>
<proteinExistence type="evidence at transcript level"/>
<dbReference type="EMBL" id="AF536960">
    <property type="protein sequence ID" value="AAN39041.1"/>
    <property type="molecule type" value="mRNA"/>
</dbReference>
<dbReference type="EMBL" id="AF536971">
    <property type="protein sequence ID" value="AAN39052.1"/>
    <property type="molecule type" value="Genomic_DNA"/>
</dbReference>
<dbReference type="EMBL" id="AP003294">
    <property type="protein sequence ID" value="BAB63731.1"/>
    <property type="molecule type" value="Genomic_DNA"/>
</dbReference>
<dbReference type="EMBL" id="AP008207">
    <property type="protein sequence ID" value="BAF05673.1"/>
    <property type="molecule type" value="Genomic_DNA"/>
</dbReference>
<dbReference type="EMBL" id="AP014957">
    <property type="protein sequence ID" value="BAS73510.1"/>
    <property type="molecule type" value="Genomic_DNA"/>
</dbReference>
<dbReference type="EMBL" id="CM000138">
    <property type="protein sequence ID" value="EAZ12960.1"/>
    <property type="molecule type" value="Genomic_DNA"/>
</dbReference>
<dbReference type="RefSeq" id="XP_015633355.1">
    <property type="nucleotide sequence ID" value="XM_015777869.1"/>
</dbReference>
<dbReference type="SMR" id="Q94DB8"/>
<dbReference type="FunCoup" id="Q94DB8">
    <property type="interactions" value="442"/>
</dbReference>
<dbReference type="STRING" id="39947.Q94DB8"/>
<dbReference type="PaxDb" id="39947-Q94DB8"/>
<dbReference type="EnsemblPlants" id="Os01t0657100-01">
    <property type="protein sequence ID" value="Os01t0657100-01"/>
    <property type="gene ID" value="Os01g0657100"/>
</dbReference>
<dbReference type="Gramene" id="Os01t0657100-01">
    <property type="protein sequence ID" value="Os01t0657100-01"/>
    <property type="gene ID" value="Os01g0657100"/>
</dbReference>
<dbReference type="KEGG" id="dosa:Os01g0657100"/>
<dbReference type="eggNOG" id="KOG0252">
    <property type="taxonomic scope" value="Eukaryota"/>
</dbReference>
<dbReference type="HOGENOM" id="CLU_001265_46_14_1"/>
<dbReference type="InParanoid" id="Q94DB8"/>
<dbReference type="OMA" id="QIGFAGK"/>
<dbReference type="OrthoDB" id="433512at2759"/>
<dbReference type="Proteomes" id="UP000000763">
    <property type="component" value="Chromosome 1"/>
</dbReference>
<dbReference type="Proteomes" id="UP000007752">
    <property type="component" value="Chromosome 1"/>
</dbReference>
<dbReference type="Proteomes" id="UP000059680">
    <property type="component" value="Chromosome 1"/>
</dbReference>
<dbReference type="GO" id="GO:0016020">
    <property type="term" value="C:membrane"/>
    <property type="evidence" value="ECO:0007669"/>
    <property type="project" value="UniProtKB-SubCell"/>
</dbReference>
<dbReference type="GO" id="GO:0005315">
    <property type="term" value="F:phosphate transmembrane transporter activity"/>
    <property type="evidence" value="ECO:0007669"/>
    <property type="project" value="InterPro"/>
</dbReference>
<dbReference type="GO" id="GO:0015293">
    <property type="term" value="F:symporter activity"/>
    <property type="evidence" value="ECO:0007669"/>
    <property type="project" value="UniProtKB-KW"/>
</dbReference>
<dbReference type="GO" id="GO:0006817">
    <property type="term" value="P:phosphate ion transport"/>
    <property type="evidence" value="ECO:0007669"/>
    <property type="project" value="UniProtKB-KW"/>
</dbReference>
<dbReference type="CDD" id="cd17364">
    <property type="entry name" value="MFS_PhT"/>
    <property type="match status" value="1"/>
</dbReference>
<dbReference type="FunFam" id="1.20.1250.20:FF:000175">
    <property type="entry name" value="Inorganic phosphate transporter 1-6"/>
    <property type="match status" value="1"/>
</dbReference>
<dbReference type="Gene3D" id="1.20.1250.20">
    <property type="entry name" value="MFS general substrate transporter like domains"/>
    <property type="match status" value="1"/>
</dbReference>
<dbReference type="InterPro" id="IPR020846">
    <property type="entry name" value="MFS_dom"/>
</dbReference>
<dbReference type="InterPro" id="IPR005828">
    <property type="entry name" value="MFS_sugar_transport-like"/>
</dbReference>
<dbReference type="InterPro" id="IPR036259">
    <property type="entry name" value="MFS_trans_sf"/>
</dbReference>
<dbReference type="InterPro" id="IPR004738">
    <property type="entry name" value="Phos_permease"/>
</dbReference>
<dbReference type="NCBIfam" id="TIGR00887">
    <property type="entry name" value="2A0109"/>
    <property type="match status" value="1"/>
</dbReference>
<dbReference type="PANTHER" id="PTHR24064">
    <property type="entry name" value="SOLUTE CARRIER FAMILY 22 MEMBER"/>
    <property type="match status" value="1"/>
</dbReference>
<dbReference type="Pfam" id="PF00083">
    <property type="entry name" value="Sugar_tr"/>
    <property type="match status" value="1"/>
</dbReference>
<dbReference type="SUPFAM" id="SSF103473">
    <property type="entry name" value="MFS general substrate transporter"/>
    <property type="match status" value="1"/>
</dbReference>
<dbReference type="PROSITE" id="PS50850">
    <property type="entry name" value="MFS"/>
    <property type="match status" value="1"/>
</dbReference>
<feature type="chain" id="PRO_0000365491" description="Inorganic phosphate transporter 1-11">
    <location>
        <begin position="1"/>
        <end position="555"/>
    </location>
</feature>
<feature type="topological domain" description="Cytoplasmic" evidence="1">
    <location>
        <begin position="1"/>
        <end position="28"/>
    </location>
</feature>
<feature type="transmembrane region" description="Helical" evidence="1">
    <location>
        <begin position="29"/>
        <end position="49"/>
    </location>
</feature>
<feature type="topological domain" description="Extracellular" evidence="1">
    <location>
        <begin position="50"/>
        <end position="77"/>
    </location>
</feature>
<feature type="transmembrane region" description="Helical" evidence="1">
    <location>
        <begin position="78"/>
        <end position="98"/>
    </location>
</feature>
<feature type="topological domain" description="Cytoplasmic" evidence="1">
    <location>
        <begin position="99"/>
        <end position="105"/>
    </location>
</feature>
<feature type="transmembrane region" description="Helical" evidence="1">
    <location>
        <begin position="106"/>
        <end position="126"/>
    </location>
</feature>
<feature type="topological domain" description="Extracellular" evidence="1">
    <location>
        <begin position="127"/>
        <end position="130"/>
    </location>
</feature>
<feature type="transmembrane region" description="Helical" evidence="1">
    <location>
        <begin position="131"/>
        <end position="151"/>
    </location>
</feature>
<feature type="topological domain" description="Cytoplasmic" evidence="1">
    <location>
        <begin position="152"/>
        <end position="167"/>
    </location>
</feature>
<feature type="transmembrane region" description="Helical" evidence="1">
    <location>
        <begin position="168"/>
        <end position="188"/>
    </location>
</feature>
<feature type="topological domain" description="Extracellular" evidence="1">
    <location>
        <begin position="189"/>
        <end position="216"/>
    </location>
</feature>
<feature type="transmembrane region" description="Helical" evidence="1">
    <location>
        <begin position="217"/>
        <end position="237"/>
    </location>
</feature>
<feature type="topological domain" description="Cytoplasmic" evidence="1">
    <location>
        <begin position="238"/>
        <end position="298"/>
    </location>
</feature>
<feature type="transmembrane region" description="Helical" evidence="1">
    <location>
        <begin position="299"/>
        <end position="319"/>
    </location>
</feature>
<feature type="topological domain" description="Extracellular" evidence="1">
    <location>
        <begin position="320"/>
        <end position="351"/>
    </location>
</feature>
<feature type="transmembrane region" description="Helical" evidence="1">
    <location>
        <begin position="352"/>
        <end position="372"/>
    </location>
</feature>
<feature type="topological domain" description="Cytoplasmic" evidence="1">
    <location>
        <begin position="373"/>
        <end position="377"/>
    </location>
</feature>
<feature type="transmembrane region" description="Helical" evidence="1">
    <location>
        <begin position="378"/>
        <end position="398"/>
    </location>
</feature>
<feature type="topological domain" description="Extracellular" evidence="1">
    <location>
        <begin position="399"/>
        <end position="408"/>
    </location>
</feature>
<feature type="transmembrane region" description="Helical" evidence="1">
    <location>
        <begin position="409"/>
        <end position="436"/>
    </location>
</feature>
<feature type="topological domain" description="Cytoplasmic" evidence="1">
    <location>
        <begin position="437"/>
        <end position="442"/>
    </location>
</feature>
<feature type="transmembrane region" description="Helical" evidence="1">
    <location>
        <begin position="443"/>
        <end position="463"/>
    </location>
</feature>
<feature type="topological domain" description="Extracellular" evidence="1">
    <location>
        <begin position="464"/>
        <end position="477"/>
    </location>
</feature>
<feature type="transmembrane region" description="Helical" evidence="1">
    <location>
        <begin position="478"/>
        <end position="498"/>
    </location>
</feature>
<feature type="topological domain" description="Cytoplasmic" evidence="1">
    <location>
        <begin position="499"/>
        <end position="555"/>
    </location>
</feature>
<feature type="region of interest" description="Disordered" evidence="2">
    <location>
        <begin position="506"/>
        <end position="555"/>
    </location>
</feature>
<feature type="compositionally biased region" description="Gly residues" evidence="2">
    <location>
        <begin position="512"/>
        <end position="521"/>
    </location>
</feature>
<feature type="compositionally biased region" description="Low complexity" evidence="2">
    <location>
        <begin position="522"/>
        <end position="535"/>
    </location>
</feature>
<feature type="compositionally biased region" description="Polar residues" evidence="2">
    <location>
        <begin position="544"/>
        <end position="555"/>
    </location>
</feature>
<evidence type="ECO:0000255" key="1"/>
<evidence type="ECO:0000256" key="2">
    <source>
        <dbReference type="SAM" id="MobiDB-lite"/>
    </source>
</evidence>
<evidence type="ECO:0000269" key="3">
    <source>
    </source>
</evidence>
<evidence type="ECO:0000305" key="4"/>
<name>PT111_ORYSJ</name>
<comment type="function">
    <text evidence="3">Symbiosis-specific regulated inorganic phosphate (Pi) transporter. Probably involved in symbiosis-mediated Pi uptake in roots colonized by myccorhizal fungi.</text>
</comment>
<comment type="subcellular location">
    <subcellularLocation>
        <location>Membrane</location>
        <topology>Multi-pass membrane protein</topology>
    </subcellularLocation>
</comment>
<comment type="induction">
    <text evidence="3">Specifically induced by the mycorrhizal fungus G. intraradices colonization in roots.</text>
</comment>
<comment type="miscellaneous">
    <text>Although related to the sugar transporter family, it does not transport sugars.</text>
</comment>
<comment type="similarity">
    <text evidence="4">Belongs to the major facilitator superfamily. Phosphate:H(+) symporter (TC 2.A.1.9) family.</text>
</comment>
<sequence>MADADGGSNLAVLDALDSARTQMYHMKAIVIAGMGFFTDAYDLFCISTVSKLLGRLYYQPDGSTDSKPGALSKTANNMVIGVALVGTLMGQLVFGYFGDKLGRKRVYGVTLILMAACAIGSGLSFGSSRKAVIGTLCFFRFWLGFGIGGDYPLSATIMSEYSNKKTRGAFIAAVFAMQGVGIIFAGLVSMIVSSIFLTYNKAPSYKGNHDLSRQMPAADYVWRIVLMIGAFPALATFYWRMKMPETARYTAIIDGNAKQAANDMQKVLSIEIEAEQEKLAKFNAANNYPLLSMEFARRHGLHLIGTTTTWFLLDIAFYSQNLTQKDIFPAMGLISGAAEVNALTEMFQISKASFLVALLGTFPGYWVTVALIDKMGRYMIQLIGFFMMSMFMLAMGILYDYLKTHHFLFGLLYALTFFFANFGPNSTTFVLPAELFPTRVRSTCHAISAAAGKAGAIVAAFGIQKLTYNSQVKSIKKALIILSITNMLGFFFTFLVPETMGRSLEEISGEDGNTGAGGGGAPAAANAGVGVSASDVSRDEKFPASSTEWQTSMHA</sequence>